<protein>
    <recommendedName>
        <fullName>Catalase</fullName>
        <ecNumber>1.11.1.6</ecNumber>
    </recommendedName>
</protein>
<organism>
    <name type="scientific">Staphylococcus aureus (strain Mu50 / ATCC 700699)</name>
    <dbReference type="NCBI Taxonomy" id="158878"/>
    <lineage>
        <taxon>Bacteria</taxon>
        <taxon>Bacillati</taxon>
        <taxon>Bacillota</taxon>
        <taxon>Bacilli</taxon>
        <taxon>Bacillales</taxon>
        <taxon>Staphylococcaceae</taxon>
        <taxon>Staphylococcus</taxon>
    </lineage>
</organism>
<feature type="chain" id="PRO_0000084998" description="Catalase">
    <location>
        <begin position="1"/>
        <end position="505"/>
    </location>
</feature>
<feature type="region of interest" description="Disordered" evidence="3">
    <location>
        <begin position="1"/>
        <end position="25"/>
    </location>
</feature>
<feature type="active site" evidence="2">
    <location>
        <position position="56"/>
    </location>
</feature>
<feature type="active site" evidence="2">
    <location>
        <position position="129"/>
    </location>
</feature>
<feature type="binding site" description="axial binding residue" evidence="1">
    <location>
        <position position="339"/>
    </location>
    <ligand>
        <name>heme</name>
        <dbReference type="ChEBI" id="CHEBI:30413"/>
    </ligand>
    <ligandPart>
        <name>Fe</name>
        <dbReference type="ChEBI" id="CHEBI:18248"/>
    </ligandPart>
</feature>
<sequence>MSQQDKKLTGVFGHPVSDRENSMTAGPRGPLLMQDIYFLEQMSQFDREVIPERRMHAKGSGAFGTFTVTKDITKYTNAKIFSEIGKQTEMFARFSTVAGERGAADAERDIRGFALKFYTEEGNWDLVGNNTPVFFFRDPKLFVSLNRAVKRDPRTNMRDAQNNWDFWTGLPEALHQVTILMSDRGIPKDLRHMHGFGSHTYSMYNDSGERVWVKFHFRTQQGIENLTDEEAAEIIATDRDSSQRDLFEAIEKGDYPKWTMYIQVMTEEQAKNHKDNPFDLTKVWYHDEYPLIEVGEFELNRNPDNYFMDVEQAAFAPTNIIPGLDFSPDKMLQGRLFSYGDAQRYRLGVNHWQIPVNQPKGVGIENICPFSRDGQMRVVDNNQGGGTHYYPNNHGKFDSQPEYKKPPFPTDGYGYEYNQRQDDDNYFEQPGKLFRLQSEDAKERIFTNTANAMEGVTDDVKRRHIRHCYKADPEYGKGVAKALGIDINSIDLETENDETYENFEK</sequence>
<name>CATA_STAAM</name>
<gene>
    <name type="primary">katA</name>
    <name type="ordered locus">SAV1334</name>
</gene>
<keyword id="KW-0349">Heme</keyword>
<keyword id="KW-0376">Hydrogen peroxide</keyword>
<keyword id="KW-0408">Iron</keyword>
<keyword id="KW-0479">Metal-binding</keyword>
<keyword id="KW-0560">Oxidoreductase</keyword>
<keyword id="KW-0575">Peroxidase</keyword>
<accession>Q99UE2</accession>
<dbReference type="EC" id="1.11.1.6"/>
<dbReference type="EMBL" id="BA000017">
    <property type="protein sequence ID" value="BAB57496.1"/>
    <property type="status" value="ALT_INIT"/>
    <property type="molecule type" value="Genomic_DNA"/>
</dbReference>
<dbReference type="RefSeq" id="WP_000082539.1">
    <property type="nucleotide sequence ID" value="NC_002758.2"/>
</dbReference>
<dbReference type="SMR" id="Q99UE2"/>
<dbReference type="KEGG" id="sav:SAV1334"/>
<dbReference type="HOGENOM" id="CLU_010645_2_0_9"/>
<dbReference type="Proteomes" id="UP000002481">
    <property type="component" value="Chromosome"/>
</dbReference>
<dbReference type="GO" id="GO:0005737">
    <property type="term" value="C:cytoplasm"/>
    <property type="evidence" value="ECO:0007669"/>
    <property type="project" value="TreeGrafter"/>
</dbReference>
<dbReference type="GO" id="GO:0004096">
    <property type="term" value="F:catalase activity"/>
    <property type="evidence" value="ECO:0007669"/>
    <property type="project" value="UniProtKB-EC"/>
</dbReference>
<dbReference type="GO" id="GO:0020037">
    <property type="term" value="F:heme binding"/>
    <property type="evidence" value="ECO:0007669"/>
    <property type="project" value="InterPro"/>
</dbReference>
<dbReference type="GO" id="GO:0046872">
    <property type="term" value="F:metal ion binding"/>
    <property type="evidence" value="ECO:0007669"/>
    <property type="project" value="UniProtKB-KW"/>
</dbReference>
<dbReference type="GO" id="GO:0042744">
    <property type="term" value="P:hydrogen peroxide catabolic process"/>
    <property type="evidence" value="ECO:0007669"/>
    <property type="project" value="UniProtKB-KW"/>
</dbReference>
<dbReference type="GO" id="GO:0042542">
    <property type="term" value="P:response to hydrogen peroxide"/>
    <property type="evidence" value="ECO:0007669"/>
    <property type="project" value="TreeGrafter"/>
</dbReference>
<dbReference type="CDD" id="cd08156">
    <property type="entry name" value="catalase_clade_3"/>
    <property type="match status" value="1"/>
</dbReference>
<dbReference type="FunFam" id="2.40.180.10:FF:000001">
    <property type="entry name" value="Catalase"/>
    <property type="match status" value="1"/>
</dbReference>
<dbReference type="Gene3D" id="2.40.180.10">
    <property type="entry name" value="Catalase core domain"/>
    <property type="match status" value="1"/>
</dbReference>
<dbReference type="InterPro" id="IPR018028">
    <property type="entry name" value="Catalase"/>
</dbReference>
<dbReference type="InterPro" id="IPR040333">
    <property type="entry name" value="Catalase_3"/>
</dbReference>
<dbReference type="InterPro" id="IPR024708">
    <property type="entry name" value="Catalase_AS"/>
</dbReference>
<dbReference type="InterPro" id="IPR024711">
    <property type="entry name" value="Catalase_clade1/3"/>
</dbReference>
<dbReference type="InterPro" id="IPR011614">
    <property type="entry name" value="Catalase_core"/>
</dbReference>
<dbReference type="InterPro" id="IPR002226">
    <property type="entry name" value="Catalase_haem_BS"/>
</dbReference>
<dbReference type="InterPro" id="IPR010582">
    <property type="entry name" value="Catalase_immune_responsive"/>
</dbReference>
<dbReference type="InterPro" id="IPR020835">
    <property type="entry name" value="Catalase_sf"/>
</dbReference>
<dbReference type="PANTHER" id="PTHR11465">
    <property type="entry name" value="CATALASE"/>
    <property type="match status" value="1"/>
</dbReference>
<dbReference type="PANTHER" id="PTHR11465:SF61">
    <property type="entry name" value="CATALASE"/>
    <property type="match status" value="1"/>
</dbReference>
<dbReference type="Pfam" id="PF00199">
    <property type="entry name" value="Catalase"/>
    <property type="match status" value="1"/>
</dbReference>
<dbReference type="Pfam" id="PF06628">
    <property type="entry name" value="Catalase-rel"/>
    <property type="match status" value="1"/>
</dbReference>
<dbReference type="PIRSF" id="PIRSF038928">
    <property type="entry name" value="Catalase_clade1-3"/>
    <property type="match status" value="1"/>
</dbReference>
<dbReference type="PRINTS" id="PR00067">
    <property type="entry name" value="CATALASE"/>
</dbReference>
<dbReference type="SMART" id="SM01060">
    <property type="entry name" value="Catalase"/>
    <property type="match status" value="1"/>
</dbReference>
<dbReference type="SUPFAM" id="SSF56634">
    <property type="entry name" value="Heme-dependent catalase-like"/>
    <property type="match status" value="1"/>
</dbReference>
<dbReference type="PROSITE" id="PS00437">
    <property type="entry name" value="CATALASE_1"/>
    <property type="match status" value="1"/>
</dbReference>
<dbReference type="PROSITE" id="PS00438">
    <property type="entry name" value="CATALASE_2"/>
    <property type="match status" value="1"/>
</dbReference>
<dbReference type="PROSITE" id="PS51402">
    <property type="entry name" value="CATALASE_3"/>
    <property type="match status" value="1"/>
</dbReference>
<proteinExistence type="inferred from homology"/>
<reference key="1">
    <citation type="journal article" date="2001" name="Lancet">
        <title>Whole genome sequencing of meticillin-resistant Staphylococcus aureus.</title>
        <authorList>
            <person name="Kuroda M."/>
            <person name="Ohta T."/>
            <person name="Uchiyama I."/>
            <person name="Baba T."/>
            <person name="Yuzawa H."/>
            <person name="Kobayashi I."/>
            <person name="Cui L."/>
            <person name="Oguchi A."/>
            <person name="Aoki K."/>
            <person name="Nagai Y."/>
            <person name="Lian J.-Q."/>
            <person name="Ito T."/>
            <person name="Kanamori M."/>
            <person name="Matsumaru H."/>
            <person name="Maruyama A."/>
            <person name="Murakami H."/>
            <person name="Hosoyama A."/>
            <person name="Mizutani-Ui Y."/>
            <person name="Takahashi N.K."/>
            <person name="Sawano T."/>
            <person name="Inoue R."/>
            <person name="Kaito C."/>
            <person name="Sekimizu K."/>
            <person name="Hirakawa H."/>
            <person name="Kuhara S."/>
            <person name="Goto S."/>
            <person name="Yabuzaki J."/>
            <person name="Kanehisa M."/>
            <person name="Yamashita A."/>
            <person name="Oshima K."/>
            <person name="Furuya K."/>
            <person name="Yoshino C."/>
            <person name="Shiba T."/>
            <person name="Hattori M."/>
            <person name="Ogasawara N."/>
            <person name="Hayashi H."/>
            <person name="Hiramatsu K."/>
        </authorList>
    </citation>
    <scope>NUCLEOTIDE SEQUENCE [LARGE SCALE GENOMIC DNA]</scope>
    <source>
        <strain>Mu50 / ATCC 700699</strain>
    </source>
</reference>
<evidence type="ECO:0000250" key="1"/>
<evidence type="ECO:0000255" key="2">
    <source>
        <dbReference type="PROSITE-ProRule" id="PRU10013"/>
    </source>
</evidence>
<evidence type="ECO:0000256" key="3">
    <source>
        <dbReference type="SAM" id="MobiDB-lite"/>
    </source>
</evidence>
<evidence type="ECO:0000305" key="4"/>
<comment type="function">
    <text evidence="1">Decomposes hydrogen peroxide into water and oxygen; serves to protect cells from the toxic effects of hydrogen peroxide.</text>
</comment>
<comment type="catalytic activity">
    <reaction evidence="2">
        <text>2 H2O2 = O2 + 2 H2O</text>
        <dbReference type="Rhea" id="RHEA:20309"/>
        <dbReference type="ChEBI" id="CHEBI:15377"/>
        <dbReference type="ChEBI" id="CHEBI:15379"/>
        <dbReference type="ChEBI" id="CHEBI:16240"/>
        <dbReference type="EC" id="1.11.1.6"/>
    </reaction>
</comment>
<comment type="cofactor">
    <cofactor evidence="1">
        <name>heme</name>
        <dbReference type="ChEBI" id="CHEBI:30413"/>
    </cofactor>
</comment>
<comment type="subunit">
    <text evidence="1">Homodimer.</text>
</comment>
<comment type="similarity">
    <text evidence="4">Belongs to the catalase family.</text>
</comment>
<comment type="sequence caution" evidence="4">
    <conflict type="erroneous initiation">
        <sequence resource="EMBL-CDS" id="BAB57496"/>
    </conflict>
</comment>